<comment type="function">
    <text evidence="1">ATP-binding RNA helicase involved in translation initiation. Remodels RNA in response to ADP and ATP concentrations by facilitating disruption, but also formation of RNA duplexes (By similarity).</text>
</comment>
<comment type="catalytic activity">
    <reaction>
        <text>ATP + H2O = ADP + phosphate + H(+)</text>
        <dbReference type="Rhea" id="RHEA:13065"/>
        <dbReference type="ChEBI" id="CHEBI:15377"/>
        <dbReference type="ChEBI" id="CHEBI:15378"/>
        <dbReference type="ChEBI" id="CHEBI:30616"/>
        <dbReference type="ChEBI" id="CHEBI:43474"/>
        <dbReference type="ChEBI" id="CHEBI:456216"/>
        <dbReference type="EC" id="3.6.4.13"/>
    </reaction>
</comment>
<comment type="subcellular location">
    <subcellularLocation>
        <location evidence="1">Cytoplasm</location>
    </subcellularLocation>
</comment>
<comment type="domain">
    <text>The Q motif is unique to and characteristic of the DEAD box family of RNA helicases and controls ATP binding and hydrolysis.</text>
</comment>
<comment type="similarity">
    <text evidence="5">Belongs to the DEAD box helicase family. DDX3/DED1 subfamily.</text>
</comment>
<sequence length="672" mass="72839">MSDISKQMNNLSVNDGANTVNNNNSFRGGRSQYVPPHLRNRQGGGNQSGSSSESSDVPFGGSQRGGFNSNGFNNNRGGFNNGGYNNNRGGFNNGGFNNRGNYNQSFGGRGGRGGFNNGGGRYQRPTPGVGKWQDGKHEPAPRNEKLEVELFGTADDSHFQSSGINFDNYDDIPVEASGDKVPEPITSFTAPPLDELLVENIQLSRFTKPTPVQKYSVPIVAAGRDLMACAQTGSGKTGGFLFPVLSESYMKGPAPVPESNGAFSSHKVYPTILVMAPTRELVSQIYEESKKFSYRSWVRACVVYGGADIGQQMRNMDRGCDLLVATPGRLKDLLDRGKVSLANIRYLVLDEADRMLDMGFEPQIRYIVEECDMPAVKDRQTLMFSATFPRDIQMLARDFLKDYVFLSVGRVGSTSENITQKILYVEDDEKKSVILDLLSANENGLTIVFTETKRMADNLADYLYDQGFPATAIHGDRSQYEREKALAAFKNGAAPILVATAVAARGLDIPNVSHVINYDLPSDIDDYVHRIGRTGRAGNVGIATAFFNRNNKNVVKGLIELLSEANQEVPDFLTKIAREGAFGKMTRGGGRGGSSRGPSRDFRRSGNSGWGNSGNSGWGNSGNASSSGWGGNSSSSYSNTNSNYGGGYNNNQRSNFSSGGSYGNQTGSNSWW</sequence>
<name>DED1_CANAL</name>
<proteinExistence type="inferred from homology"/>
<reference key="1">
    <citation type="journal article" date="2004" name="Proc. Natl. Acad. Sci. U.S.A.">
        <title>The diploid genome sequence of Candida albicans.</title>
        <authorList>
            <person name="Jones T."/>
            <person name="Federspiel N.A."/>
            <person name="Chibana H."/>
            <person name="Dungan J."/>
            <person name="Kalman S."/>
            <person name="Magee B.B."/>
            <person name="Newport G."/>
            <person name="Thorstenson Y.R."/>
            <person name="Agabian N."/>
            <person name="Magee P.T."/>
            <person name="Davis R.W."/>
            <person name="Scherer S."/>
        </authorList>
    </citation>
    <scope>NUCLEOTIDE SEQUENCE [LARGE SCALE GENOMIC DNA]</scope>
    <source>
        <strain>SC5314 / ATCC MYA-2876</strain>
    </source>
</reference>
<reference key="2">
    <citation type="journal article" date="2007" name="Genome Biol.">
        <title>Assembly of the Candida albicans genome into sixteen supercontigs aligned on the eight chromosomes.</title>
        <authorList>
            <person name="van het Hoog M."/>
            <person name="Rast T.J."/>
            <person name="Martchenko M."/>
            <person name="Grindle S."/>
            <person name="Dignard D."/>
            <person name="Hogues H."/>
            <person name="Cuomo C."/>
            <person name="Berriman M."/>
            <person name="Scherer S."/>
            <person name="Magee B.B."/>
            <person name="Whiteway M."/>
            <person name="Chibana H."/>
            <person name="Nantel A."/>
            <person name="Magee P.T."/>
        </authorList>
    </citation>
    <scope>GENOME REANNOTATION</scope>
    <source>
        <strain>SC5314 / ATCC MYA-2876</strain>
    </source>
</reference>
<reference key="3">
    <citation type="journal article" date="2013" name="Genome Biol.">
        <title>Assembly of a phased diploid Candida albicans genome facilitates allele-specific measurements and provides a simple model for repeat and indel structure.</title>
        <authorList>
            <person name="Muzzey D."/>
            <person name="Schwartz K."/>
            <person name="Weissman J.S."/>
            <person name="Sherlock G."/>
        </authorList>
    </citation>
    <scope>NUCLEOTIDE SEQUENCE [LARGE SCALE GENOMIC DNA]</scope>
    <scope>GENOME REANNOTATION</scope>
    <source>
        <strain>SC5314 / ATCC MYA-2876</strain>
    </source>
</reference>
<feature type="chain" id="PRO_0000232155" description="ATP-dependent RNA helicase DED1">
    <location>
        <begin position="1"/>
        <end position="672"/>
    </location>
</feature>
<feature type="domain" description="Helicase ATP-binding" evidence="2">
    <location>
        <begin position="217"/>
        <end position="406"/>
    </location>
</feature>
<feature type="domain" description="Helicase C-terminal" evidence="3">
    <location>
        <begin position="417"/>
        <end position="577"/>
    </location>
</feature>
<feature type="region of interest" description="Disordered" evidence="4">
    <location>
        <begin position="1"/>
        <end position="142"/>
    </location>
</feature>
<feature type="region of interest" description="Disordered" evidence="4">
    <location>
        <begin position="583"/>
        <end position="672"/>
    </location>
</feature>
<feature type="short sequence motif" description="Q motif">
    <location>
        <begin position="186"/>
        <end position="214"/>
    </location>
</feature>
<feature type="short sequence motif" description="DEAD box">
    <location>
        <begin position="350"/>
        <end position="353"/>
    </location>
</feature>
<feature type="compositionally biased region" description="Polar residues" evidence="4">
    <location>
        <begin position="1"/>
        <end position="13"/>
    </location>
</feature>
<feature type="compositionally biased region" description="Low complexity" evidence="4">
    <location>
        <begin position="14"/>
        <end position="24"/>
    </location>
</feature>
<feature type="compositionally biased region" description="Low complexity" evidence="4">
    <location>
        <begin position="48"/>
        <end position="106"/>
    </location>
</feature>
<feature type="compositionally biased region" description="Gly residues" evidence="4">
    <location>
        <begin position="107"/>
        <end position="121"/>
    </location>
</feature>
<feature type="compositionally biased region" description="Basic and acidic residues" evidence="4">
    <location>
        <begin position="133"/>
        <end position="142"/>
    </location>
</feature>
<feature type="compositionally biased region" description="Gly residues" evidence="4">
    <location>
        <begin position="586"/>
        <end position="595"/>
    </location>
</feature>
<feature type="compositionally biased region" description="Gly residues" evidence="4">
    <location>
        <begin position="608"/>
        <end position="620"/>
    </location>
</feature>
<feature type="compositionally biased region" description="Low complexity" evidence="4">
    <location>
        <begin position="621"/>
        <end position="643"/>
    </location>
</feature>
<feature type="compositionally biased region" description="Polar residues" evidence="4">
    <location>
        <begin position="652"/>
        <end position="672"/>
    </location>
</feature>
<feature type="binding site" evidence="2">
    <location>
        <begin position="230"/>
        <end position="237"/>
    </location>
    <ligand>
        <name>ATP</name>
        <dbReference type="ChEBI" id="CHEBI:30616"/>
    </ligand>
</feature>
<dbReference type="EC" id="3.6.4.13"/>
<dbReference type="EMBL" id="CP017625">
    <property type="protein sequence ID" value="AOW28618.1"/>
    <property type="molecule type" value="Genomic_DNA"/>
</dbReference>
<dbReference type="RefSeq" id="XP_716633.1">
    <property type="nucleotide sequence ID" value="XM_711540.1"/>
</dbReference>
<dbReference type="SMR" id="Q5A4E2"/>
<dbReference type="BioGRID" id="1224846">
    <property type="interactions" value="1"/>
</dbReference>
<dbReference type="FunCoup" id="Q5A4E2">
    <property type="interactions" value="1411"/>
</dbReference>
<dbReference type="STRING" id="237561.Q5A4E2"/>
<dbReference type="EnsemblFungi" id="C3_06100C_A-T">
    <property type="protein sequence ID" value="C3_06100C_A-T-p1"/>
    <property type="gene ID" value="C3_06100C_A"/>
</dbReference>
<dbReference type="GeneID" id="3641752"/>
<dbReference type="KEGG" id="cal:CAALFM_C306100CA"/>
<dbReference type="CGD" id="CAL0000190729">
    <property type="gene designation" value="DED1"/>
</dbReference>
<dbReference type="VEuPathDB" id="FungiDB:C3_06100C_A"/>
<dbReference type="eggNOG" id="KOG0335">
    <property type="taxonomic scope" value="Eukaryota"/>
</dbReference>
<dbReference type="HOGENOM" id="CLU_003041_16_3_1"/>
<dbReference type="InParanoid" id="Q5A4E2"/>
<dbReference type="OMA" id="CYRSWVR"/>
<dbReference type="OrthoDB" id="196131at2759"/>
<dbReference type="Proteomes" id="UP000000559">
    <property type="component" value="Chromosome 3"/>
</dbReference>
<dbReference type="GO" id="GO:0010494">
    <property type="term" value="C:cytoplasmic stress granule"/>
    <property type="evidence" value="ECO:0007669"/>
    <property type="project" value="EnsemblFungi"/>
</dbReference>
<dbReference type="GO" id="GO:0005634">
    <property type="term" value="C:nucleus"/>
    <property type="evidence" value="ECO:0000318"/>
    <property type="project" value="GO_Central"/>
</dbReference>
<dbReference type="GO" id="GO:0005681">
    <property type="term" value="C:spliceosomal complex"/>
    <property type="evidence" value="ECO:0007669"/>
    <property type="project" value="EnsemblFungi"/>
</dbReference>
<dbReference type="GO" id="GO:0005524">
    <property type="term" value="F:ATP binding"/>
    <property type="evidence" value="ECO:0007669"/>
    <property type="project" value="UniProtKB-KW"/>
</dbReference>
<dbReference type="GO" id="GO:0016887">
    <property type="term" value="F:ATP hydrolysis activity"/>
    <property type="evidence" value="ECO:0007669"/>
    <property type="project" value="RHEA"/>
</dbReference>
<dbReference type="GO" id="GO:0031370">
    <property type="term" value="F:eukaryotic initiation factor 4G binding"/>
    <property type="evidence" value="ECO:0007669"/>
    <property type="project" value="EnsemblFungi"/>
</dbReference>
<dbReference type="GO" id="GO:0051880">
    <property type="term" value="F:G-quadruplex DNA binding"/>
    <property type="evidence" value="ECO:0007669"/>
    <property type="project" value="EnsemblFungi"/>
</dbReference>
<dbReference type="GO" id="GO:0002151">
    <property type="term" value="F:G-quadruplex RNA binding"/>
    <property type="evidence" value="ECO:0007669"/>
    <property type="project" value="EnsemblFungi"/>
</dbReference>
<dbReference type="GO" id="GO:0003729">
    <property type="term" value="F:mRNA binding"/>
    <property type="evidence" value="ECO:0000318"/>
    <property type="project" value="GO_Central"/>
</dbReference>
<dbReference type="GO" id="GO:0003724">
    <property type="term" value="F:RNA helicase activity"/>
    <property type="evidence" value="ECO:0000318"/>
    <property type="project" value="GO_Central"/>
</dbReference>
<dbReference type="GO" id="GO:0033592">
    <property type="term" value="F:RNA strand annealing activity"/>
    <property type="evidence" value="ECO:0007669"/>
    <property type="project" value="EnsemblFungi"/>
</dbReference>
<dbReference type="GO" id="GO:0003743">
    <property type="term" value="F:translation initiation factor activity"/>
    <property type="evidence" value="ECO:0007669"/>
    <property type="project" value="UniProtKB-KW"/>
</dbReference>
<dbReference type="GO" id="GO:0002183">
    <property type="term" value="P:cytoplasmic translational initiation"/>
    <property type="evidence" value="ECO:0007669"/>
    <property type="project" value="EnsemblFungi"/>
</dbReference>
<dbReference type="GO" id="GO:1990625">
    <property type="term" value="P:negative regulation of cytoplasmic translational initiation in response to stress"/>
    <property type="evidence" value="ECO:0007669"/>
    <property type="project" value="EnsemblFungi"/>
</dbReference>
<dbReference type="GO" id="GO:1901195">
    <property type="term" value="P:positive regulation of formation of translation preinitiation complex"/>
    <property type="evidence" value="ECO:0007669"/>
    <property type="project" value="EnsemblFungi"/>
</dbReference>
<dbReference type="GO" id="GO:0031047">
    <property type="term" value="P:regulatory ncRNA-mediated gene silencing"/>
    <property type="evidence" value="ECO:0007669"/>
    <property type="project" value="EnsemblFungi"/>
</dbReference>
<dbReference type="GO" id="GO:0000390">
    <property type="term" value="P:spliceosomal complex disassembly"/>
    <property type="evidence" value="ECO:0007669"/>
    <property type="project" value="EnsemblFungi"/>
</dbReference>
<dbReference type="CDD" id="cd18787">
    <property type="entry name" value="SF2_C_DEAD"/>
    <property type="match status" value="1"/>
</dbReference>
<dbReference type="FunFam" id="3.40.50.300:FF:000160">
    <property type="entry name" value="ATP-dependent RNA helicase DDX3X"/>
    <property type="match status" value="1"/>
</dbReference>
<dbReference type="FunFam" id="3.40.50.300:FF:000008">
    <property type="entry name" value="ATP-dependent RNA helicase RhlB"/>
    <property type="match status" value="1"/>
</dbReference>
<dbReference type="Gene3D" id="3.40.50.300">
    <property type="entry name" value="P-loop containing nucleotide triphosphate hydrolases"/>
    <property type="match status" value="2"/>
</dbReference>
<dbReference type="InterPro" id="IPR011545">
    <property type="entry name" value="DEAD/DEAH_box_helicase_dom"/>
</dbReference>
<dbReference type="InterPro" id="IPR014001">
    <property type="entry name" value="Helicase_ATP-bd"/>
</dbReference>
<dbReference type="InterPro" id="IPR001650">
    <property type="entry name" value="Helicase_C-like"/>
</dbReference>
<dbReference type="InterPro" id="IPR027417">
    <property type="entry name" value="P-loop_NTPase"/>
</dbReference>
<dbReference type="InterPro" id="IPR000629">
    <property type="entry name" value="RNA-helicase_DEAD-box_CS"/>
</dbReference>
<dbReference type="InterPro" id="IPR014014">
    <property type="entry name" value="RNA_helicase_DEAD_Q_motif"/>
</dbReference>
<dbReference type="PANTHER" id="PTHR47958">
    <property type="entry name" value="ATP-DEPENDENT RNA HELICASE DBP3"/>
    <property type="match status" value="1"/>
</dbReference>
<dbReference type="Pfam" id="PF00270">
    <property type="entry name" value="DEAD"/>
    <property type="match status" value="1"/>
</dbReference>
<dbReference type="Pfam" id="PF00271">
    <property type="entry name" value="Helicase_C"/>
    <property type="match status" value="1"/>
</dbReference>
<dbReference type="SMART" id="SM00487">
    <property type="entry name" value="DEXDc"/>
    <property type="match status" value="1"/>
</dbReference>
<dbReference type="SMART" id="SM00490">
    <property type="entry name" value="HELICc"/>
    <property type="match status" value="1"/>
</dbReference>
<dbReference type="SUPFAM" id="SSF52540">
    <property type="entry name" value="P-loop containing nucleoside triphosphate hydrolases"/>
    <property type="match status" value="1"/>
</dbReference>
<dbReference type="PROSITE" id="PS00039">
    <property type="entry name" value="DEAD_ATP_HELICASE"/>
    <property type="match status" value="1"/>
</dbReference>
<dbReference type="PROSITE" id="PS51192">
    <property type="entry name" value="HELICASE_ATP_BIND_1"/>
    <property type="match status" value="1"/>
</dbReference>
<dbReference type="PROSITE" id="PS51194">
    <property type="entry name" value="HELICASE_CTER"/>
    <property type="match status" value="1"/>
</dbReference>
<dbReference type="PROSITE" id="PS51195">
    <property type="entry name" value="Q_MOTIF"/>
    <property type="match status" value="1"/>
</dbReference>
<organism>
    <name type="scientific">Candida albicans (strain SC5314 / ATCC MYA-2876)</name>
    <name type="common">Yeast</name>
    <dbReference type="NCBI Taxonomy" id="237561"/>
    <lineage>
        <taxon>Eukaryota</taxon>
        <taxon>Fungi</taxon>
        <taxon>Dikarya</taxon>
        <taxon>Ascomycota</taxon>
        <taxon>Saccharomycotina</taxon>
        <taxon>Pichiomycetes</taxon>
        <taxon>Debaryomycetaceae</taxon>
        <taxon>Candida/Lodderomyces clade</taxon>
        <taxon>Candida</taxon>
    </lineage>
</organism>
<keyword id="KW-0067">ATP-binding</keyword>
<keyword id="KW-0963">Cytoplasm</keyword>
<keyword id="KW-0347">Helicase</keyword>
<keyword id="KW-0378">Hydrolase</keyword>
<keyword id="KW-0396">Initiation factor</keyword>
<keyword id="KW-0547">Nucleotide-binding</keyword>
<keyword id="KW-0648">Protein biosynthesis</keyword>
<keyword id="KW-1185">Reference proteome</keyword>
<keyword id="KW-0694">RNA-binding</keyword>
<gene>
    <name type="primary">DED1</name>
    <name type="ordered locus">CAALFM_C306100CA</name>
    <name type="ORF">CaO19.7392</name>
</gene>
<protein>
    <recommendedName>
        <fullName>ATP-dependent RNA helicase DED1</fullName>
        <ecNumber>3.6.4.13</ecNumber>
    </recommendedName>
</protein>
<evidence type="ECO:0000250" key="1"/>
<evidence type="ECO:0000255" key="2">
    <source>
        <dbReference type="PROSITE-ProRule" id="PRU00541"/>
    </source>
</evidence>
<evidence type="ECO:0000255" key="3">
    <source>
        <dbReference type="PROSITE-ProRule" id="PRU00542"/>
    </source>
</evidence>
<evidence type="ECO:0000256" key="4">
    <source>
        <dbReference type="SAM" id="MobiDB-lite"/>
    </source>
</evidence>
<evidence type="ECO:0000305" key="5"/>
<accession>Q5A4E2</accession>
<accession>A0A1D8PKK6</accession>